<sequence>MEVMQVLHMNRGNGENSYAKNSTVQSKIISIGKPIIEEAVHEISCNNVLESMGIADLGCSSGPNTLCVISEIMDMVQATSHRLGHPVPEFRLYLNDLYSNDFNSIFMSLPAFYHRLKEEKGIGCGSCFISGVAGSFYGRLFPSKSLHYVHSSSSLHWLSQVPPGLESNAVTPLNKGKVYISKSSPHSVLHAYSLQFQNDFPMFIESRSQELVSGGRMVLSLFGRRSTDPTTEESCYQWELLAQAIMSLVREGLIEEEKVDSFNTPFYAPCAEEIKVEIQKEGSFIIDRLEGFEIDWDGGAVSDVHTAQGKLLIGQRAAKALRAVVESMLESHFGIGQDIMDDLFSRYAEIVGNHLSKTRTKYFNLVISLTRKG</sequence>
<protein>
    <recommendedName>
        <fullName evidence="9">Probable jasmonic acid carboxyl methyltransferase 1</fullName>
        <ecNumber evidence="4">2.1.1.141</ecNumber>
    </recommendedName>
</protein>
<accession>A0A061FDP1</accession>
<feature type="chain" id="PRO_0000451777" description="Probable jasmonic acid carboxyl methyltransferase 1">
    <location>
        <begin position="1"/>
        <end position="373"/>
    </location>
</feature>
<feature type="binding site" evidence="2">
    <location>
        <position position="18"/>
    </location>
    <ligand>
        <name>S-adenosyl-L-homocysteine</name>
        <dbReference type="ChEBI" id="CHEBI:57856"/>
    </ligand>
</feature>
<feature type="binding site" evidence="2">
    <location>
        <position position="25"/>
    </location>
    <ligand>
        <name>jasmonate</name>
        <dbReference type="ChEBI" id="CHEBI:58431"/>
    </ligand>
</feature>
<feature type="binding site" evidence="2">
    <location>
        <position position="59"/>
    </location>
    <ligand>
        <name>S-adenosyl-L-homocysteine</name>
        <dbReference type="ChEBI" id="CHEBI:57856"/>
    </ligand>
</feature>
<feature type="binding site" evidence="2">
    <location>
        <position position="64"/>
    </location>
    <ligand>
        <name>S-adenosyl-L-homocysteine</name>
        <dbReference type="ChEBI" id="CHEBI:57856"/>
    </ligand>
</feature>
<feature type="binding site" evidence="2">
    <location>
        <position position="96"/>
    </location>
    <ligand>
        <name>S-adenosyl-L-homocysteine</name>
        <dbReference type="ChEBI" id="CHEBI:57856"/>
    </ligand>
</feature>
<feature type="binding site" evidence="1">
    <location>
        <position position="97"/>
    </location>
    <ligand>
        <name>S-adenosyl-L-homocysteine</name>
        <dbReference type="ChEBI" id="CHEBI:57856"/>
    </ligand>
</feature>
<feature type="binding site" evidence="2">
    <location>
        <position position="135"/>
    </location>
    <ligand>
        <name>S-adenosyl-L-homocysteine</name>
        <dbReference type="ChEBI" id="CHEBI:57856"/>
    </ligand>
</feature>
<feature type="binding site" evidence="2">
    <location>
        <position position="136"/>
    </location>
    <ligand>
        <name>S-adenosyl-L-homocysteine</name>
        <dbReference type="ChEBI" id="CHEBI:57856"/>
    </ligand>
</feature>
<feature type="binding site" evidence="2">
    <location>
        <position position="156"/>
    </location>
    <ligand>
        <name>jasmonate</name>
        <dbReference type="ChEBI" id="CHEBI:58431"/>
    </ligand>
</feature>
<feature type="binding site" evidence="2">
    <location>
        <position position="157"/>
    </location>
    <ligand>
        <name>jasmonate</name>
        <dbReference type="ChEBI" id="CHEBI:58431"/>
    </ligand>
</feature>
<feature type="binding site" evidence="5">
    <location>
        <position position="174"/>
    </location>
    <ligand>
        <name>Mg(2+)</name>
        <dbReference type="ChEBI" id="CHEBI:18420"/>
    </ligand>
</feature>
<feature type="binding site" evidence="5">
    <location>
        <position position="260"/>
    </location>
    <ligand>
        <name>Mg(2+)</name>
        <dbReference type="ChEBI" id="CHEBI:18420"/>
    </ligand>
</feature>
<feature type="binding site" evidence="5">
    <location>
        <position position="262"/>
    </location>
    <ligand>
        <name>Mg(2+)</name>
        <dbReference type="ChEBI" id="CHEBI:18420"/>
    </ligand>
</feature>
<feature type="binding site" evidence="5">
    <location>
        <position position="263"/>
    </location>
    <ligand>
        <name>Mg(2+)</name>
        <dbReference type="ChEBI" id="CHEBI:18420"/>
    </ligand>
</feature>
<feature type="site" description="Involved in substrate discrimination" evidence="6">
    <location>
        <position position="150"/>
    </location>
</feature>
<feature type="site" description="Involved in substrate discrimination" evidence="3">
    <location>
        <position position="222"/>
    </location>
</feature>
<comment type="function">
    <text evidence="4">Catalyzes the methylation of jasmonate into methyljasmonate, a plant volatile that acts as an important cellular regulator mediating diverse developmental processes and defense responses.</text>
</comment>
<comment type="catalytic activity">
    <reaction evidence="4">
        <text>jasmonate + S-adenosyl-L-methionine = methyl (-)-jasmonate + S-adenosyl-L-homocysteine</text>
        <dbReference type="Rhea" id="RHEA:13349"/>
        <dbReference type="ChEBI" id="CHEBI:15929"/>
        <dbReference type="ChEBI" id="CHEBI:57856"/>
        <dbReference type="ChEBI" id="CHEBI:58431"/>
        <dbReference type="ChEBI" id="CHEBI:59789"/>
        <dbReference type="EC" id="2.1.1.141"/>
    </reaction>
</comment>
<comment type="cofactor">
    <cofactor evidence="5">
        <name>Mg(2+)</name>
        <dbReference type="ChEBI" id="CHEBI:18420"/>
    </cofactor>
    <text evidence="5">Binds 1 Mg(2+) ion per subunit.</text>
</comment>
<comment type="pathway">
    <text evidence="4">Lipid metabolism; oxylipin biosynthesis.</text>
</comment>
<comment type="subcellular location">
    <subcellularLocation>
        <location evidence="7">Cytoplasm</location>
    </subcellularLocation>
    <subcellularLocation>
        <location evidence="7">Nucleus</location>
    </subcellularLocation>
    <text evidence="7">Predominantly cytoplasmic (By similarity). Partially nuclear (By similarity).</text>
</comment>
<comment type="similarity">
    <text evidence="8">Belongs to the methyltransferase superfamily. Type-7 methyltransferase family.</text>
</comment>
<dbReference type="EC" id="2.1.1.141" evidence="4"/>
<dbReference type="EMBL" id="CM001886">
    <property type="protein sequence ID" value="EOY14822.1"/>
    <property type="molecule type" value="Genomic_DNA"/>
</dbReference>
<dbReference type="SMR" id="A0A061FDP1"/>
<dbReference type="FunCoup" id="A0A061FDP1">
    <property type="interactions" value="67"/>
</dbReference>
<dbReference type="STRING" id="3641.A0A061FDP1"/>
<dbReference type="EnsemblPlants" id="EOY14822">
    <property type="protein sequence ID" value="EOY14822"/>
    <property type="gene ID" value="TCM_034089"/>
</dbReference>
<dbReference type="Gramene" id="EOY14822">
    <property type="protein sequence ID" value="EOY14822"/>
    <property type="gene ID" value="TCM_034089"/>
</dbReference>
<dbReference type="eggNOG" id="ENOG502QQYU">
    <property type="taxonomic scope" value="Eukaryota"/>
</dbReference>
<dbReference type="HOGENOM" id="CLU_019628_2_0_1"/>
<dbReference type="InParanoid" id="A0A061FDP1"/>
<dbReference type="OMA" id="LNIMCNN"/>
<dbReference type="UniPathway" id="UPA00382"/>
<dbReference type="Proteomes" id="UP000026915">
    <property type="component" value="Chromosome 8"/>
</dbReference>
<dbReference type="Proteomes" id="UP000694886">
    <property type="component" value="Unplaced"/>
</dbReference>
<dbReference type="GO" id="GO:0005737">
    <property type="term" value="C:cytoplasm"/>
    <property type="evidence" value="ECO:0007669"/>
    <property type="project" value="UniProtKB-SubCell"/>
</dbReference>
<dbReference type="GO" id="GO:0005634">
    <property type="term" value="C:nucleus"/>
    <property type="evidence" value="ECO:0007669"/>
    <property type="project" value="UniProtKB-SubCell"/>
</dbReference>
<dbReference type="GO" id="GO:0046872">
    <property type="term" value="F:metal ion binding"/>
    <property type="evidence" value="ECO:0007669"/>
    <property type="project" value="UniProtKB-KW"/>
</dbReference>
<dbReference type="GO" id="GO:0030795">
    <property type="term" value="F:methyl jasmonate methylesterase activity"/>
    <property type="evidence" value="ECO:0007669"/>
    <property type="project" value="UniProtKB-EC"/>
</dbReference>
<dbReference type="GO" id="GO:0008757">
    <property type="term" value="F:S-adenosylmethionine-dependent methyltransferase activity"/>
    <property type="evidence" value="ECO:0000318"/>
    <property type="project" value="GO_Central"/>
</dbReference>
<dbReference type="GO" id="GO:0032259">
    <property type="term" value="P:methylation"/>
    <property type="evidence" value="ECO:0000318"/>
    <property type="project" value="GO_Central"/>
</dbReference>
<dbReference type="GO" id="GO:0031408">
    <property type="term" value="P:oxylipin biosynthetic process"/>
    <property type="evidence" value="ECO:0007669"/>
    <property type="project" value="UniProtKB-UniPathway"/>
</dbReference>
<dbReference type="Gene3D" id="1.10.1200.270">
    <property type="entry name" value="Methyltransferase, alpha-helical capping domain"/>
    <property type="match status" value="1"/>
</dbReference>
<dbReference type="Gene3D" id="3.40.50.150">
    <property type="entry name" value="Vaccinia Virus protein VP39"/>
    <property type="match status" value="1"/>
</dbReference>
<dbReference type="InterPro" id="IPR005299">
    <property type="entry name" value="MeTrfase_7"/>
</dbReference>
<dbReference type="InterPro" id="IPR042086">
    <property type="entry name" value="MeTrfase_capping"/>
</dbReference>
<dbReference type="InterPro" id="IPR029063">
    <property type="entry name" value="SAM-dependent_MTases_sf"/>
</dbReference>
<dbReference type="PANTHER" id="PTHR31009">
    <property type="entry name" value="S-ADENOSYL-L-METHIONINE:CARBOXYL METHYLTRANSFERASE FAMILY PROTEIN"/>
    <property type="match status" value="1"/>
</dbReference>
<dbReference type="Pfam" id="PF03492">
    <property type="entry name" value="Methyltransf_7"/>
    <property type="match status" value="1"/>
</dbReference>
<dbReference type="SUPFAM" id="SSF53335">
    <property type="entry name" value="S-adenosyl-L-methionine-dependent methyltransferases"/>
    <property type="match status" value="1"/>
</dbReference>
<keyword id="KW-0963">Cytoplasm</keyword>
<keyword id="KW-0460">Magnesium</keyword>
<keyword id="KW-0479">Metal-binding</keyword>
<keyword id="KW-0489">Methyltransferase</keyword>
<keyword id="KW-0539">Nucleus</keyword>
<keyword id="KW-1185">Reference proteome</keyword>
<keyword id="KW-0808">Transferase</keyword>
<evidence type="ECO:0000250" key="1">
    <source>
        <dbReference type="UniProtKB" id="A0A6C0WW36"/>
    </source>
</evidence>
<evidence type="ECO:0000250" key="2">
    <source>
        <dbReference type="UniProtKB" id="B2KPR3"/>
    </source>
</evidence>
<evidence type="ECO:0000250" key="3">
    <source>
        <dbReference type="UniProtKB" id="Q2HXI6"/>
    </source>
</evidence>
<evidence type="ECO:0000250" key="4">
    <source>
        <dbReference type="UniProtKB" id="Q9AR07"/>
    </source>
</evidence>
<evidence type="ECO:0000250" key="5">
    <source>
        <dbReference type="UniProtKB" id="Q9FLN8"/>
    </source>
</evidence>
<evidence type="ECO:0000250" key="6">
    <source>
        <dbReference type="UniProtKB" id="Q9FZN8"/>
    </source>
</evidence>
<evidence type="ECO:0000250" key="7">
    <source>
        <dbReference type="UniProtKB" id="Q9SBK6"/>
    </source>
</evidence>
<evidence type="ECO:0000305" key="8"/>
<evidence type="ECO:0000312" key="9">
    <source>
        <dbReference type="EMBL" id="EOY14822.1"/>
    </source>
</evidence>
<name>JMT1_THECC</name>
<organism>
    <name type="scientific">Theobroma cacao</name>
    <name type="common">Cacao</name>
    <name type="synonym">Cocoa</name>
    <dbReference type="NCBI Taxonomy" id="3641"/>
    <lineage>
        <taxon>Eukaryota</taxon>
        <taxon>Viridiplantae</taxon>
        <taxon>Streptophyta</taxon>
        <taxon>Embryophyta</taxon>
        <taxon>Tracheophyta</taxon>
        <taxon>Spermatophyta</taxon>
        <taxon>Magnoliopsida</taxon>
        <taxon>eudicotyledons</taxon>
        <taxon>Gunneridae</taxon>
        <taxon>Pentapetalae</taxon>
        <taxon>rosids</taxon>
        <taxon>malvids</taxon>
        <taxon>Malvales</taxon>
        <taxon>Malvaceae</taxon>
        <taxon>Byttnerioideae</taxon>
        <taxon>Theobroma</taxon>
    </lineage>
</organism>
<proteinExistence type="inferred from homology"/>
<gene>
    <name evidence="9" type="ORF">TCM_034089</name>
</gene>
<reference key="1">
    <citation type="journal article" date="2013" name="Genome Biol.">
        <title>The genome sequence of the most widely cultivated cacao type and its use to identify candidate genes regulating pod color.</title>
        <authorList>
            <person name="Motamayor J.C."/>
            <person name="Mockaitis K."/>
            <person name="Schmutz J."/>
            <person name="Haiminen N."/>
            <person name="Livingstone D. III"/>
            <person name="Cornejo O."/>
            <person name="Findley S.D."/>
            <person name="Zheng P."/>
            <person name="Utro F."/>
            <person name="Royaert S."/>
            <person name="Saski C."/>
            <person name="Jenkins J."/>
            <person name="Podicheti R."/>
            <person name="Zhao M."/>
            <person name="Scheffler B.E."/>
            <person name="Stack J.C."/>
            <person name="Feltus F.A."/>
            <person name="Mustiga G.M."/>
            <person name="Amores F."/>
            <person name="Phillips W."/>
            <person name="Marelli J.P."/>
            <person name="May G.D."/>
            <person name="Shapiro H."/>
            <person name="Ma J."/>
            <person name="Bustamante C.D."/>
            <person name="Schnell R.J."/>
            <person name="Main D."/>
            <person name="Gilbert D."/>
            <person name="Parida L."/>
            <person name="Kuhn D.N."/>
        </authorList>
    </citation>
    <scope>NUCLEOTIDE SEQUENCE [LARGE SCALE GENOMIC DNA]</scope>
    <source>
        <strain>cv. Matina 1-6</strain>
    </source>
</reference>